<organism>
    <name type="scientific">Psychromonas ingrahamii (strain DSM 17664 / CCUG 51855 / 37)</name>
    <dbReference type="NCBI Taxonomy" id="357804"/>
    <lineage>
        <taxon>Bacteria</taxon>
        <taxon>Pseudomonadati</taxon>
        <taxon>Pseudomonadota</taxon>
        <taxon>Gammaproteobacteria</taxon>
        <taxon>Alteromonadales</taxon>
        <taxon>Psychromonadaceae</taxon>
        <taxon>Psychromonas</taxon>
    </lineage>
</organism>
<reference key="1">
    <citation type="journal article" date="2008" name="BMC Genomics">
        <title>Genomics of an extreme psychrophile, Psychromonas ingrahamii.</title>
        <authorList>
            <person name="Riley M."/>
            <person name="Staley J.T."/>
            <person name="Danchin A."/>
            <person name="Wang T.Z."/>
            <person name="Brettin T.S."/>
            <person name="Hauser L.J."/>
            <person name="Land M.L."/>
            <person name="Thompson L.S."/>
        </authorList>
    </citation>
    <scope>NUCLEOTIDE SEQUENCE [LARGE SCALE GENOMIC DNA]</scope>
    <source>
        <strain>DSM 17664 / CCUG 51855 / 37</strain>
    </source>
</reference>
<protein>
    <recommendedName>
        <fullName evidence="1">tRNA 2-selenouridine synthase</fullName>
        <ecNumber evidence="1">2.9.1.3</ecNumber>
    </recommendedName>
</protein>
<name>SELU_PSYIN</name>
<evidence type="ECO:0000255" key="1">
    <source>
        <dbReference type="HAMAP-Rule" id="MF_01622"/>
    </source>
</evidence>
<feature type="chain" id="PRO_0000292706" description="tRNA 2-selenouridine synthase">
    <location>
        <begin position="1"/>
        <end position="365"/>
    </location>
</feature>
<feature type="domain" description="Rhodanese" evidence="1">
    <location>
        <begin position="16"/>
        <end position="138"/>
    </location>
</feature>
<feature type="active site" description="S-selanylcysteine intermediate" evidence="1">
    <location>
        <position position="98"/>
    </location>
</feature>
<gene>
    <name evidence="1" type="primary">selU</name>
    <name type="ordered locus">Ping_0285</name>
</gene>
<comment type="function">
    <text evidence="1">Involved in the post-transcriptional modification of the uridine at the wobble position (U34) of tRNA(Lys), tRNA(Glu) and tRNA(Gln). Catalyzes the conversion of 2-thiouridine (S2U-RNA) to 2-selenouridine (Se2U-RNA). Acts in a two-step process involving geranylation of 2-thiouridine (S2U) to S-geranyl-2-thiouridine (geS2U) and subsequent selenation of the latter derivative to 2-selenouridine (Se2U) in the tRNA chain.</text>
</comment>
<comment type="catalytic activity">
    <reaction evidence="1">
        <text>5-methylaminomethyl-2-thiouridine(34) in tRNA + selenophosphate + (2E)-geranyl diphosphate + H2O + H(+) = 5-methylaminomethyl-2-selenouridine(34) in tRNA + (2E)-thiogeraniol + phosphate + diphosphate</text>
        <dbReference type="Rhea" id="RHEA:42716"/>
        <dbReference type="Rhea" id="RHEA-COMP:10195"/>
        <dbReference type="Rhea" id="RHEA-COMP:10196"/>
        <dbReference type="ChEBI" id="CHEBI:15377"/>
        <dbReference type="ChEBI" id="CHEBI:15378"/>
        <dbReference type="ChEBI" id="CHEBI:16144"/>
        <dbReference type="ChEBI" id="CHEBI:33019"/>
        <dbReference type="ChEBI" id="CHEBI:43474"/>
        <dbReference type="ChEBI" id="CHEBI:58057"/>
        <dbReference type="ChEBI" id="CHEBI:74455"/>
        <dbReference type="ChEBI" id="CHEBI:82743"/>
        <dbReference type="ChEBI" id="CHEBI:143703"/>
        <dbReference type="EC" id="2.9.1.3"/>
    </reaction>
    <physiologicalReaction direction="left-to-right" evidence="1">
        <dbReference type="Rhea" id="RHEA:42717"/>
    </physiologicalReaction>
</comment>
<comment type="catalytic activity">
    <reaction evidence="1">
        <text>5-methylaminomethyl-2-thiouridine(34) in tRNA + (2E)-geranyl diphosphate = 5-methylaminomethyl-S-(2E)-geranyl-thiouridine(34) in tRNA + diphosphate</text>
        <dbReference type="Rhea" id="RHEA:14085"/>
        <dbReference type="Rhea" id="RHEA-COMP:10195"/>
        <dbReference type="Rhea" id="RHEA-COMP:14654"/>
        <dbReference type="ChEBI" id="CHEBI:33019"/>
        <dbReference type="ChEBI" id="CHEBI:58057"/>
        <dbReference type="ChEBI" id="CHEBI:74455"/>
        <dbReference type="ChEBI" id="CHEBI:140632"/>
    </reaction>
    <physiologicalReaction direction="left-to-right" evidence="1">
        <dbReference type="Rhea" id="RHEA:14086"/>
    </physiologicalReaction>
</comment>
<comment type="catalytic activity">
    <reaction evidence="1">
        <text>5-methylaminomethyl-S-(2E)-geranyl-thiouridine(34) in tRNA + selenophosphate + H(+) = 5-methylaminomethyl-2-(Se-phospho)selenouridine(34) in tRNA + (2E)-thiogeraniol</text>
        <dbReference type="Rhea" id="RHEA:60172"/>
        <dbReference type="Rhea" id="RHEA-COMP:14654"/>
        <dbReference type="Rhea" id="RHEA-COMP:15523"/>
        <dbReference type="ChEBI" id="CHEBI:15378"/>
        <dbReference type="ChEBI" id="CHEBI:16144"/>
        <dbReference type="ChEBI" id="CHEBI:140632"/>
        <dbReference type="ChEBI" id="CHEBI:143702"/>
        <dbReference type="ChEBI" id="CHEBI:143703"/>
    </reaction>
    <physiologicalReaction direction="left-to-right" evidence="1">
        <dbReference type="Rhea" id="RHEA:60173"/>
    </physiologicalReaction>
</comment>
<comment type="catalytic activity">
    <reaction evidence="1">
        <text>5-methylaminomethyl-2-(Se-phospho)selenouridine(34) in tRNA + H2O = 5-methylaminomethyl-2-selenouridine(34) in tRNA + phosphate</text>
        <dbReference type="Rhea" id="RHEA:60176"/>
        <dbReference type="Rhea" id="RHEA-COMP:10196"/>
        <dbReference type="Rhea" id="RHEA-COMP:15523"/>
        <dbReference type="ChEBI" id="CHEBI:15377"/>
        <dbReference type="ChEBI" id="CHEBI:43474"/>
        <dbReference type="ChEBI" id="CHEBI:82743"/>
        <dbReference type="ChEBI" id="CHEBI:143702"/>
    </reaction>
    <physiologicalReaction direction="left-to-right" evidence="1">
        <dbReference type="Rhea" id="RHEA:60177"/>
    </physiologicalReaction>
</comment>
<comment type="subunit">
    <text evidence="1">Monomer.</text>
</comment>
<comment type="similarity">
    <text evidence="1">Belongs to the SelU family.</text>
</comment>
<sequence>MQQSDLQEQQLYRSLFLLKTPLIDLRAPVEFAQGAFPESCNLPLMTDNEREQVGTCYKKEGQAAAITLGHQLVASDIQNRIRKWAQFKEENPTAWLYCFRGGLRSRLSAQFLKDHGVDINIVPGGYKALRRYLINVIDQASEKKLMIVGGNTGCGKTLLIQALDNGLDIEGRANHRGSSFGKQVTEQPRQISYENQLAVDILHISQHASSLVIEDESKAVGALYVPERLFAGMTRAPMVVVNDPLEIRLQRLCYEYCTLMTEKFNLALGAEQGWQAYEKYLQNGLYGIRKRLGTEKFKVMNTVLEAALKQQKNTGSVEGHLNWIASILRDYYDPMYQYQLEKKADRVQFRGTFQEVKEWLTVNTK</sequence>
<proteinExistence type="inferred from homology"/>
<keyword id="KW-1185">Reference proteome</keyword>
<keyword id="KW-0711">Selenium</keyword>
<keyword id="KW-0808">Transferase</keyword>
<dbReference type="EC" id="2.9.1.3" evidence="1"/>
<dbReference type="EMBL" id="CP000510">
    <property type="protein sequence ID" value="ABM02151.1"/>
    <property type="molecule type" value="Genomic_DNA"/>
</dbReference>
<dbReference type="SMR" id="A1SRN6"/>
<dbReference type="STRING" id="357804.Ping_0285"/>
<dbReference type="KEGG" id="pin:Ping_0285"/>
<dbReference type="eggNOG" id="COG2603">
    <property type="taxonomic scope" value="Bacteria"/>
</dbReference>
<dbReference type="HOGENOM" id="CLU_043456_1_0_6"/>
<dbReference type="OrthoDB" id="9808735at2"/>
<dbReference type="Proteomes" id="UP000000639">
    <property type="component" value="Chromosome"/>
</dbReference>
<dbReference type="GO" id="GO:0016765">
    <property type="term" value="F:transferase activity, transferring alkyl or aryl (other than methyl) groups"/>
    <property type="evidence" value="ECO:0007669"/>
    <property type="project" value="UniProtKB-UniRule"/>
</dbReference>
<dbReference type="GO" id="GO:0043828">
    <property type="term" value="F:tRNA 2-selenouridine synthase activity"/>
    <property type="evidence" value="ECO:0007669"/>
    <property type="project" value="UniProtKB-EC"/>
</dbReference>
<dbReference type="GO" id="GO:0002098">
    <property type="term" value="P:tRNA wobble uridine modification"/>
    <property type="evidence" value="ECO:0007669"/>
    <property type="project" value="UniProtKB-UniRule"/>
</dbReference>
<dbReference type="Gene3D" id="3.40.250.10">
    <property type="entry name" value="Rhodanese-like domain"/>
    <property type="match status" value="1"/>
</dbReference>
<dbReference type="HAMAP" id="MF_01622">
    <property type="entry name" value="tRNA_sel_U_synth"/>
    <property type="match status" value="1"/>
</dbReference>
<dbReference type="InterPro" id="IPR001763">
    <property type="entry name" value="Rhodanese-like_dom"/>
</dbReference>
<dbReference type="InterPro" id="IPR036873">
    <property type="entry name" value="Rhodanese-like_dom_sf"/>
</dbReference>
<dbReference type="InterPro" id="IPR017582">
    <property type="entry name" value="SelU"/>
</dbReference>
<dbReference type="NCBIfam" id="NF008750">
    <property type="entry name" value="PRK11784.1-2"/>
    <property type="match status" value="1"/>
</dbReference>
<dbReference type="NCBIfam" id="NF008751">
    <property type="entry name" value="PRK11784.1-3"/>
    <property type="match status" value="1"/>
</dbReference>
<dbReference type="NCBIfam" id="TIGR03167">
    <property type="entry name" value="tRNA_sel_U_synt"/>
    <property type="match status" value="1"/>
</dbReference>
<dbReference type="PANTHER" id="PTHR30401">
    <property type="entry name" value="TRNA 2-SELENOURIDINE SYNTHASE"/>
    <property type="match status" value="1"/>
</dbReference>
<dbReference type="PANTHER" id="PTHR30401:SF0">
    <property type="entry name" value="TRNA 2-SELENOURIDINE SYNTHASE"/>
    <property type="match status" value="1"/>
</dbReference>
<dbReference type="Pfam" id="PF00581">
    <property type="entry name" value="Rhodanese"/>
    <property type="match status" value="1"/>
</dbReference>
<dbReference type="SMART" id="SM00450">
    <property type="entry name" value="RHOD"/>
    <property type="match status" value="1"/>
</dbReference>
<dbReference type="SUPFAM" id="SSF52821">
    <property type="entry name" value="Rhodanese/Cell cycle control phosphatase"/>
    <property type="match status" value="1"/>
</dbReference>
<dbReference type="PROSITE" id="PS50206">
    <property type="entry name" value="RHODANESE_3"/>
    <property type="match status" value="1"/>
</dbReference>
<accession>A1SRN6</accession>